<keyword id="KW-0012">Acyltransferase</keyword>
<keyword id="KW-1283">Bacterial microcompartment</keyword>
<keyword id="KW-0479">Metal-binding</keyword>
<keyword id="KW-1185">Reference proteome</keyword>
<keyword id="KW-0808">Transferase</keyword>
<keyword id="KW-0862">Zinc</keyword>
<dbReference type="EC" id="2.3.1.222"/>
<dbReference type="EMBL" id="FN543502">
    <property type="protein sequence ID" value="CBG88882.1"/>
    <property type="molecule type" value="Genomic_DNA"/>
</dbReference>
<dbReference type="RefSeq" id="WP_012906338.1">
    <property type="nucleotide sequence ID" value="NC_013716.1"/>
</dbReference>
<dbReference type="SMR" id="D2TPR5"/>
<dbReference type="STRING" id="637910.ROD_21331"/>
<dbReference type="KEGG" id="cro:ROD_21331"/>
<dbReference type="eggNOG" id="COG4869">
    <property type="taxonomic scope" value="Bacteria"/>
</dbReference>
<dbReference type="HOGENOM" id="CLU_080676_1_0_6"/>
<dbReference type="OrthoDB" id="9784365at2"/>
<dbReference type="UniPathway" id="UPA00621"/>
<dbReference type="Proteomes" id="UP000001889">
    <property type="component" value="Chromosome"/>
</dbReference>
<dbReference type="GO" id="GO:0031469">
    <property type="term" value="C:bacterial microcompartment"/>
    <property type="evidence" value="ECO:0007669"/>
    <property type="project" value="UniProtKB-SubCell"/>
</dbReference>
<dbReference type="GO" id="GO:0016747">
    <property type="term" value="F:acyltransferase activity, transferring groups other than amino-acyl groups"/>
    <property type="evidence" value="ECO:0007669"/>
    <property type="project" value="InterPro"/>
</dbReference>
<dbReference type="GO" id="GO:0046872">
    <property type="term" value="F:metal ion binding"/>
    <property type="evidence" value="ECO:0007669"/>
    <property type="project" value="UniProtKB-KW"/>
</dbReference>
<dbReference type="GO" id="GO:0051144">
    <property type="term" value="P:propanediol catabolic process"/>
    <property type="evidence" value="ECO:0007669"/>
    <property type="project" value="UniProtKB-UniPathway"/>
</dbReference>
<dbReference type="InterPro" id="IPR008300">
    <property type="entry name" value="PTAC"/>
</dbReference>
<dbReference type="NCBIfam" id="NF011652">
    <property type="entry name" value="PRK15070.1"/>
    <property type="match status" value="1"/>
</dbReference>
<dbReference type="PANTHER" id="PTHR39453">
    <property type="entry name" value="PHOSPHATE PROPANOYLTRANSFERASE"/>
    <property type="match status" value="1"/>
</dbReference>
<dbReference type="PANTHER" id="PTHR39453:SF1">
    <property type="entry name" value="PHOSPHATE PROPANOYLTRANSFERASE"/>
    <property type="match status" value="1"/>
</dbReference>
<dbReference type="Pfam" id="PF06130">
    <property type="entry name" value="PTAC"/>
    <property type="match status" value="1"/>
</dbReference>
<dbReference type="PIRSF" id="PIRSF010130">
    <property type="entry name" value="PduL"/>
    <property type="match status" value="1"/>
</dbReference>
<feature type="chain" id="PRO_0000407700" description="Phosphate propanoyltransferase">
    <location>
        <begin position="1"/>
        <end position="210"/>
    </location>
</feature>
<feature type="binding site" evidence="1">
    <location>
        <begin position="26"/>
        <end position="28"/>
    </location>
    <ligand>
        <name>CoA</name>
        <dbReference type="ChEBI" id="CHEBI:57287"/>
    </ligand>
</feature>
<feature type="binding site" evidence="1">
    <location>
        <position position="30"/>
    </location>
    <ligand>
        <name>Zn(2+)</name>
        <dbReference type="ChEBI" id="CHEBI:29105"/>
        <label>1</label>
    </ligand>
</feature>
<feature type="binding site" evidence="1">
    <location>
        <position position="32"/>
    </location>
    <ligand>
        <name>Zn(2+)</name>
        <dbReference type="ChEBI" id="CHEBI:29105"/>
        <label>1</label>
    </ligand>
</feature>
<feature type="binding site" evidence="1">
    <location>
        <position position="71"/>
    </location>
    <ligand>
        <name>CoA</name>
        <dbReference type="ChEBI" id="CHEBI:57287"/>
    </ligand>
</feature>
<feature type="binding site" evidence="1">
    <location>
        <position position="78"/>
    </location>
    <ligand>
        <name>CoA</name>
        <dbReference type="ChEBI" id="CHEBI:57287"/>
    </ligand>
</feature>
<feature type="binding site" evidence="1">
    <location>
        <position position="84"/>
    </location>
    <ligand>
        <name>phosphate</name>
        <dbReference type="ChEBI" id="CHEBI:43474"/>
    </ligand>
</feature>
<feature type="binding site" evidence="1">
    <location>
        <position position="90"/>
    </location>
    <ligand>
        <name>Zn(2+)</name>
        <dbReference type="ChEBI" id="CHEBI:29105"/>
        <label>1</label>
    </ligand>
</feature>
<feature type="binding site" evidence="1">
    <location>
        <position position="138"/>
    </location>
    <ligand>
        <name>Zn(2+)</name>
        <dbReference type="ChEBI" id="CHEBI:29105"/>
        <label>2</label>
    </ligand>
</feature>
<feature type="binding site" evidence="1">
    <location>
        <position position="140"/>
    </location>
    <ligand>
        <name>Zn(2+)</name>
        <dbReference type="ChEBI" id="CHEBI:29105"/>
        <label>2</label>
    </ligand>
</feature>
<feature type="binding site" evidence="1">
    <location>
        <position position="186"/>
    </location>
    <ligand>
        <name>Zn(2+)</name>
        <dbReference type="ChEBI" id="CHEBI:29105"/>
        <label>2</label>
    </ligand>
</feature>
<feature type="binding site" evidence="1">
    <location>
        <position position="193"/>
    </location>
    <ligand>
        <name>CoA</name>
        <dbReference type="ChEBI" id="CHEBI:57287"/>
    </ligand>
</feature>
<comment type="function">
    <text evidence="2">Involved in 1,2-propanediol (1,2-PD) utilization within the bacterial microcompartment (BMC) dedicated to 1,2-PD degradation by catalyzing the conversion of propanoyl-CoA to propanoyl-phosphate.</text>
</comment>
<comment type="catalytic activity">
    <reaction evidence="2">
        <text>propanoyl-CoA + phosphate = propanoyl phosphate + CoA</text>
        <dbReference type="Rhea" id="RHEA:28046"/>
        <dbReference type="ChEBI" id="CHEBI:43474"/>
        <dbReference type="ChEBI" id="CHEBI:57287"/>
        <dbReference type="ChEBI" id="CHEBI:57392"/>
        <dbReference type="ChEBI" id="CHEBI:58933"/>
        <dbReference type="EC" id="2.3.1.222"/>
    </reaction>
</comment>
<comment type="cofactor">
    <cofactor evidence="1">
        <name>Zn(2+)</name>
        <dbReference type="ChEBI" id="CHEBI:29105"/>
    </cofactor>
    <text evidence="1">There are 2 Zn(2+) ions per monomer; Zn(2+) and CoA bind inbetween the 2 domains in each monomer.</text>
</comment>
<comment type="pathway">
    <text>Polyol metabolism; 1,2-propanediol degradation.</text>
</comment>
<comment type="subcellular location">
    <subcellularLocation>
        <location evidence="2">Bacterial microcompartment</location>
    </subcellularLocation>
</comment>
<comment type="domain">
    <text evidence="1">Formed by 2 beta-barrels, each is capped on both ends by short alpha-helices.</text>
</comment>
<comment type="similarity">
    <text evidence="3">Belongs to the PduL family.</text>
</comment>
<organism>
    <name type="scientific">Citrobacter rodentium (strain ICC168)</name>
    <name type="common">Citrobacter freundii biotype 4280</name>
    <dbReference type="NCBI Taxonomy" id="637910"/>
    <lineage>
        <taxon>Bacteria</taxon>
        <taxon>Pseudomonadati</taxon>
        <taxon>Pseudomonadota</taxon>
        <taxon>Gammaproteobacteria</taxon>
        <taxon>Enterobacterales</taxon>
        <taxon>Enterobacteriaceae</taxon>
        <taxon>Citrobacter</taxon>
    </lineage>
</organism>
<protein>
    <recommendedName>
        <fullName>Phosphate propanoyltransferase</fullName>
        <ecNumber>2.3.1.222</ecNumber>
    </recommendedName>
    <alternativeName>
        <fullName>Phosphate acyltransferase PduL</fullName>
    </alternativeName>
    <alternativeName>
        <fullName>Phosphotransacylase PduL</fullName>
        <shortName>PTAC</shortName>
    </alternativeName>
    <alternativeName>
        <fullName>Propanediol utilization protein PduL</fullName>
    </alternativeName>
</protein>
<proteinExistence type="inferred from homology"/>
<gene>
    <name type="primary">pduL</name>
    <name type="ordered locus">ROD_21331</name>
</gene>
<evidence type="ECO:0000250" key="1">
    <source>
        <dbReference type="UniProtKB" id="Q21A54"/>
    </source>
</evidence>
<evidence type="ECO:0000250" key="2">
    <source>
        <dbReference type="UniProtKB" id="Q9XDN5"/>
    </source>
</evidence>
<evidence type="ECO:0000305" key="3"/>
<accession>D2TPR5</accession>
<sequence length="210" mass="22632">MDKHLLETTVSKVLDEMRERPIPLGVSNRHIHLSAEDYARLFPGRPISEKKALLQPGQYAAEQTVTLAGPKGELKNVRLLGPLRSTSQVEISRTDARTLGIAAPLRMSGDLKGTPGIRLISPFAEITLASGVIVAQRHIHMSPLDALILRVTHGDSVCVAIEGTGRRLIFDNVAVRVSPDMRLEMHIDTDEANAAGADAPGAFATLAAPR</sequence>
<reference key="1">
    <citation type="journal article" date="2010" name="J. Bacteriol.">
        <title>The Citrobacter rodentium genome sequence reveals convergent evolution with human pathogenic Escherichia coli.</title>
        <authorList>
            <person name="Petty N.K."/>
            <person name="Bulgin R."/>
            <person name="Crepin V.F."/>
            <person name="Cerdeno-Tarraga A.M."/>
            <person name="Schroeder G.N."/>
            <person name="Quail M.A."/>
            <person name="Lennard N."/>
            <person name="Corton C."/>
            <person name="Barron A."/>
            <person name="Clark L."/>
            <person name="Toribio A.L."/>
            <person name="Parkhill J."/>
            <person name="Dougan G."/>
            <person name="Frankel G."/>
            <person name="Thomson N.R."/>
        </authorList>
    </citation>
    <scope>NUCLEOTIDE SEQUENCE [LARGE SCALE GENOMIC DNA]</scope>
    <source>
        <strain>ICC168</strain>
    </source>
</reference>
<name>PDUL_CITRI</name>